<protein>
    <recommendedName>
        <fullName evidence="1">Leucine--tRNA ligase</fullName>
        <ecNumber evidence="1">6.1.1.4</ecNumber>
    </recommendedName>
    <alternativeName>
        <fullName evidence="1">Leucyl-tRNA synthetase</fullName>
        <shortName evidence="1">LeuRS</shortName>
    </alternativeName>
</protein>
<sequence length="859" mass="96762">MQEQYNPSEIEALVQKHWHDNKTFEVTEDANKEKFYCLSMFPYPSGRLHMGHVRNYTIGDVVARFQRLQGKNVLQPIGWDSFGLPAENAAINNKTAPAPWTYQNIEYMKNQLKLLGFGYDWSREIATCTPEYYRWEQWFFTKLYEKGLVYKKTASVNWCPNDETVLANEQVQDGCCWRCDTPVEQKEIPQWFIKITAYAEELLNDIDTLDGWPEQVKTMQRNWIGRSEGVEMTFGVAGSDKSFDIYTTRPDTLMGVTYVAIAAGHPLAELAAQSNPELAQFIEECKNSTTSEADLATMEKRGVATGLYAIHPISGKQVPIWAANFVLMNYGTGAVMSVPGHDQRDYEFAKKYNLPIEAVIKPVDGELDISEAAYTEKGVLFNSGEFDGLDFDGAFNAIADKLVAEGKGKRQVNYRLRDWGVSRQRYWGAPIPMVTLADGTVIPTPEDQLPVILPEDVVMDGIQSPIKADKEWAKTQVNGQDALRETDTFDTFMESSWYYARYCSPQADQMLDPTKANYWLPVDQYIGGIEHACMHLLYFRFFHKLLRDAGLVNSNEPAKQLLTQGMVLADAFYYTNDKGARVWVSPLDVVTTEKDDKGRVTKAIDKDGNELVYTGMCKMSKSKNNGIDPQVMVEKYGADTVRLFMMFASPPELTLEWQESGVEGAHRFIKRLWKLASDYVAQDNSEALDVSKLTSEQKALRREVHKTIAKVTDDIGRRQMFNTAVAAVMELMNHLQKAPQTTGQDRAIIGEALTAVVRLLYPIIPHVSFTLWNELGNTNSIEDSQWPVVDESALVEDSKLIVVQVNGKVRAKITVAADADQASVEALGMADEQVIKYLDGVTVRKVIYVPGKLLSIVAN</sequence>
<name>SYL_SHESR</name>
<feature type="chain" id="PRO_1000009428" description="Leucine--tRNA ligase">
    <location>
        <begin position="1"/>
        <end position="859"/>
    </location>
</feature>
<feature type="short sequence motif" description="'HIGH' region">
    <location>
        <begin position="42"/>
        <end position="52"/>
    </location>
</feature>
<feature type="short sequence motif" description="'KMSKS' region">
    <location>
        <begin position="618"/>
        <end position="622"/>
    </location>
</feature>
<feature type="binding site" evidence="1">
    <location>
        <position position="621"/>
    </location>
    <ligand>
        <name>ATP</name>
        <dbReference type="ChEBI" id="CHEBI:30616"/>
    </ligand>
</feature>
<gene>
    <name evidence="1" type="primary">leuS</name>
    <name type="ordered locus">Shewmr7_1062</name>
</gene>
<comment type="catalytic activity">
    <reaction evidence="1">
        <text>tRNA(Leu) + L-leucine + ATP = L-leucyl-tRNA(Leu) + AMP + diphosphate</text>
        <dbReference type="Rhea" id="RHEA:11688"/>
        <dbReference type="Rhea" id="RHEA-COMP:9613"/>
        <dbReference type="Rhea" id="RHEA-COMP:9622"/>
        <dbReference type="ChEBI" id="CHEBI:30616"/>
        <dbReference type="ChEBI" id="CHEBI:33019"/>
        <dbReference type="ChEBI" id="CHEBI:57427"/>
        <dbReference type="ChEBI" id="CHEBI:78442"/>
        <dbReference type="ChEBI" id="CHEBI:78494"/>
        <dbReference type="ChEBI" id="CHEBI:456215"/>
        <dbReference type="EC" id="6.1.1.4"/>
    </reaction>
</comment>
<comment type="subcellular location">
    <subcellularLocation>
        <location evidence="1">Cytoplasm</location>
    </subcellularLocation>
</comment>
<comment type="similarity">
    <text evidence="1">Belongs to the class-I aminoacyl-tRNA synthetase family.</text>
</comment>
<organism>
    <name type="scientific">Shewanella sp. (strain MR-7)</name>
    <dbReference type="NCBI Taxonomy" id="60481"/>
    <lineage>
        <taxon>Bacteria</taxon>
        <taxon>Pseudomonadati</taxon>
        <taxon>Pseudomonadota</taxon>
        <taxon>Gammaproteobacteria</taxon>
        <taxon>Alteromonadales</taxon>
        <taxon>Shewanellaceae</taxon>
        <taxon>Shewanella</taxon>
    </lineage>
</organism>
<dbReference type="EC" id="6.1.1.4" evidence="1"/>
<dbReference type="EMBL" id="CP000444">
    <property type="protein sequence ID" value="ABI42061.1"/>
    <property type="molecule type" value="Genomic_DNA"/>
</dbReference>
<dbReference type="SMR" id="Q0HXU4"/>
<dbReference type="KEGG" id="shm:Shewmr7_1062"/>
<dbReference type="HOGENOM" id="CLU_004427_0_0_6"/>
<dbReference type="GO" id="GO:0005829">
    <property type="term" value="C:cytosol"/>
    <property type="evidence" value="ECO:0007669"/>
    <property type="project" value="TreeGrafter"/>
</dbReference>
<dbReference type="GO" id="GO:0002161">
    <property type="term" value="F:aminoacyl-tRNA deacylase activity"/>
    <property type="evidence" value="ECO:0007669"/>
    <property type="project" value="InterPro"/>
</dbReference>
<dbReference type="GO" id="GO:0005524">
    <property type="term" value="F:ATP binding"/>
    <property type="evidence" value="ECO:0007669"/>
    <property type="project" value="UniProtKB-UniRule"/>
</dbReference>
<dbReference type="GO" id="GO:0004823">
    <property type="term" value="F:leucine-tRNA ligase activity"/>
    <property type="evidence" value="ECO:0007669"/>
    <property type="project" value="UniProtKB-UniRule"/>
</dbReference>
<dbReference type="GO" id="GO:0006429">
    <property type="term" value="P:leucyl-tRNA aminoacylation"/>
    <property type="evidence" value="ECO:0007669"/>
    <property type="project" value="UniProtKB-UniRule"/>
</dbReference>
<dbReference type="CDD" id="cd07958">
    <property type="entry name" value="Anticodon_Ia_Leu_BEm"/>
    <property type="match status" value="1"/>
</dbReference>
<dbReference type="CDD" id="cd00812">
    <property type="entry name" value="LeuRS_core"/>
    <property type="match status" value="1"/>
</dbReference>
<dbReference type="FunFam" id="1.10.730.10:FF:000003">
    <property type="entry name" value="Leucine--tRNA ligase"/>
    <property type="match status" value="1"/>
</dbReference>
<dbReference type="FunFam" id="2.20.28.290:FF:000001">
    <property type="entry name" value="Leucine--tRNA ligase"/>
    <property type="match status" value="1"/>
</dbReference>
<dbReference type="FunFam" id="3.10.20.590:FF:000001">
    <property type="entry name" value="Leucine--tRNA ligase"/>
    <property type="match status" value="1"/>
</dbReference>
<dbReference type="FunFam" id="3.40.50.620:FF:000003">
    <property type="entry name" value="Leucine--tRNA ligase"/>
    <property type="match status" value="1"/>
</dbReference>
<dbReference type="FunFam" id="3.40.50.620:FF:000124">
    <property type="entry name" value="Leucine--tRNA ligase"/>
    <property type="match status" value="1"/>
</dbReference>
<dbReference type="FunFam" id="3.90.740.10:FF:000012">
    <property type="entry name" value="Leucine--tRNA ligase"/>
    <property type="match status" value="1"/>
</dbReference>
<dbReference type="Gene3D" id="2.20.28.290">
    <property type="match status" value="1"/>
</dbReference>
<dbReference type="Gene3D" id="3.10.20.590">
    <property type="match status" value="1"/>
</dbReference>
<dbReference type="Gene3D" id="3.40.50.620">
    <property type="entry name" value="HUPs"/>
    <property type="match status" value="1"/>
</dbReference>
<dbReference type="Gene3D" id="1.10.730.10">
    <property type="entry name" value="Isoleucyl-tRNA Synthetase, Domain 1"/>
    <property type="match status" value="1"/>
</dbReference>
<dbReference type="Gene3D" id="3.90.740.10">
    <property type="entry name" value="Valyl/Leucyl/Isoleucyl-tRNA synthetase, editing domain"/>
    <property type="match status" value="1"/>
</dbReference>
<dbReference type="HAMAP" id="MF_00049_B">
    <property type="entry name" value="Leu_tRNA_synth_B"/>
    <property type="match status" value="1"/>
</dbReference>
<dbReference type="InterPro" id="IPR001412">
    <property type="entry name" value="aa-tRNA-synth_I_CS"/>
</dbReference>
<dbReference type="InterPro" id="IPR002300">
    <property type="entry name" value="aa-tRNA-synth_Ia"/>
</dbReference>
<dbReference type="InterPro" id="IPR002302">
    <property type="entry name" value="Leu-tRNA-ligase"/>
</dbReference>
<dbReference type="InterPro" id="IPR025709">
    <property type="entry name" value="Leu_tRNA-synth_edit"/>
</dbReference>
<dbReference type="InterPro" id="IPR013155">
    <property type="entry name" value="M/V/L/I-tRNA-synth_anticd-bd"/>
</dbReference>
<dbReference type="InterPro" id="IPR015413">
    <property type="entry name" value="Methionyl/Leucyl_tRNA_Synth"/>
</dbReference>
<dbReference type="InterPro" id="IPR014729">
    <property type="entry name" value="Rossmann-like_a/b/a_fold"/>
</dbReference>
<dbReference type="InterPro" id="IPR009080">
    <property type="entry name" value="tRNAsynth_Ia_anticodon-bd"/>
</dbReference>
<dbReference type="InterPro" id="IPR009008">
    <property type="entry name" value="Val/Leu/Ile-tRNA-synth_edit"/>
</dbReference>
<dbReference type="NCBIfam" id="TIGR00396">
    <property type="entry name" value="leuS_bact"/>
    <property type="match status" value="1"/>
</dbReference>
<dbReference type="PANTHER" id="PTHR43740:SF2">
    <property type="entry name" value="LEUCINE--TRNA LIGASE, MITOCHONDRIAL"/>
    <property type="match status" value="1"/>
</dbReference>
<dbReference type="PANTHER" id="PTHR43740">
    <property type="entry name" value="LEUCYL-TRNA SYNTHETASE"/>
    <property type="match status" value="1"/>
</dbReference>
<dbReference type="Pfam" id="PF08264">
    <property type="entry name" value="Anticodon_1"/>
    <property type="match status" value="1"/>
</dbReference>
<dbReference type="Pfam" id="PF00133">
    <property type="entry name" value="tRNA-synt_1"/>
    <property type="match status" value="2"/>
</dbReference>
<dbReference type="Pfam" id="PF13603">
    <property type="entry name" value="tRNA-synt_1_2"/>
    <property type="match status" value="1"/>
</dbReference>
<dbReference type="Pfam" id="PF09334">
    <property type="entry name" value="tRNA-synt_1g"/>
    <property type="match status" value="1"/>
</dbReference>
<dbReference type="PRINTS" id="PR00985">
    <property type="entry name" value="TRNASYNTHLEU"/>
</dbReference>
<dbReference type="SUPFAM" id="SSF47323">
    <property type="entry name" value="Anticodon-binding domain of a subclass of class I aminoacyl-tRNA synthetases"/>
    <property type="match status" value="1"/>
</dbReference>
<dbReference type="SUPFAM" id="SSF52374">
    <property type="entry name" value="Nucleotidylyl transferase"/>
    <property type="match status" value="1"/>
</dbReference>
<dbReference type="SUPFAM" id="SSF50677">
    <property type="entry name" value="ValRS/IleRS/LeuRS editing domain"/>
    <property type="match status" value="1"/>
</dbReference>
<dbReference type="PROSITE" id="PS00178">
    <property type="entry name" value="AA_TRNA_LIGASE_I"/>
    <property type="match status" value="1"/>
</dbReference>
<reference key="1">
    <citation type="submission" date="2006-08" db="EMBL/GenBank/DDBJ databases">
        <title>Complete sequence of chromosome 1 of Shewanella sp. MR-7.</title>
        <authorList>
            <person name="Copeland A."/>
            <person name="Lucas S."/>
            <person name="Lapidus A."/>
            <person name="Barry K."/>
            <person name="Detter J.C."/>
            <person name="Glavina del Rio T."/>
            <person name="Hammon N."/>
            <person name="Israni S."/>
            <person name="Dalin E."/>
            <person name="Tice H."/>
            <person name="Pitluck S."/>
            <person name="Kiss H."/>
            <person name="Brettin T."/>
            <person name="Bruce D."/>
            <person name="Han C."/>
            <person name="Tapia R."/>
            <person name="Gilna P."/>
            <person name="Schmutz J."/>
            <person name="Larimer F."/>
            <person name="Land M."/>
            <person name="Hauser L."/>
            <person name="Kyrpides N."/>
            <person name="Mikhailova N."/>
            <person name="Nealson K."/>
            <person name="Konstantinidis K."/>
            <person name="Klappenbach J."/>
            <person name="Tiedje J."/>
            <person name="Richardson P."/>
        </authorList>
    </citation>
    <scope>NUCLEOTIDE SEQUENCE [LARGE SCALE GENOMIC DNA]</scope>
    <source>
        <strain>MR-7</strain>
    </source>
</reference>
<accession>Q0HXU4</accession>
<evidence type="ECO:0000255" key="1">
    <source>
        <dbReference type="HAMAP-Rule" id="MF_00049"/>
    </source>
</evidence>
<keyword id="KW-0030">Aminoacyl-tRNA synthetase</keyword>
<keyword id="KW-0067">ATP-binding</keyword>
<keyword id="KW-0963">Cytoplasm</keyword>
<keyword id="KW-0436">Ligase</keyword>
<keyword id="KW-0547">Nucleotide-binding</keyword>
<keyword id="KW-0648">Protein biosynthesis</keyword>
<proteinExistence type="inferred from homology"/>